<dbReference type="EMBL" id="CP000948">
    <property type="protein sequence ID" value="ACB02287.1"/>
    <property type="molecule type" value="Genomic_DNA"/>
</dbReference>
<dbReference type="RefSeq" id="WP_000103754.1">
    <property type="nucleotide sequence ID" value="NC_010473.1"/>
</dbReference>
<dbReference type="SMR" id="B1XA04"/>
<dbReference type="GeneID" id="98387866"/>
<dbReference type="KEGG" id="ecd:ECDH10B_1166"/>
<dbReference type="HOGENOM" id="CLU_108696_5_1_6"/>
<dbReference type="UniPathway" id="UPA00094"/>
<dbReference type="GO" id="GO:0005829">
    <property type="term" value="C:cytosol"/>
    <property type="evidence" value="ECO:0007669"/>
    <property type="project" value="TreeGrafter"/>
</dbReference>
<dbReference type="GO" id="GO:0016020">
    <property type="term" value="C:membrane"/>
    <property type="evidence" value="ECO:0007669"/>
    <property type="project" value="GOC"/>
</dbReference>
<dbReference type="GO" id="GO:0000035">
    <property type="term" value="F:acyl binding"/>
    <property type="evidence" value="ECO:0007669"/>
    <property type="project" value="TreeGrafter"/>
</dbReference>
<dbReference type="GO" id="GO:0000036">
    <property type="term" value="F:acyl carrier activity"/>
    <property type="evidence" value="ECO:0007669"/>
    <property type="project" value="UniProtKB-UniRule"/>
</dbReference>
<dbReference type="GO" id="GO:0009245">
    <property type="term" value="P:lipid A biosynthetic process"/>
    <property type="evidence" value="ECO:0007669"/>
    <property type="project" value="TreeGrafter"/>
</dbReference>
<dbReference type="FunFam" id="1.10.1200.10:FF:000001">
    <property type="entry name" value="Acyl carrier protein"/>
    <property type="match status" value="1"/>
</dbReference>
<dbReference type="Gene3D" id="1.10.1200.10">
    <property type="entry name" value="ACP-like"/>
    <property type="match status" value="1"/>
</dbReference>
<dbReference type="HAMAP" id="MF_01217">
    <property type="entry name" value="Acyl_carrier"/>
    <property type="match status" value="1"/>
</dbReference>
<dbReference type="InterPro" id="IPR003231">
    <property type="entry name" value="ACP"/>
</dbReference>
<dbReference type="InterPro" id="IPR036736">
    <property type="entry name" value="ACP-like_sf"/>
</dbReference>
<dbReference type="InterPro" id="IPR009081">
    <property type="entry name" value="PP-bd_ACP"/>
</dbReference>
<dbReference type="InterPro" id="IPR006162">
    <property type="entry name" value="Ppantetheine_attach_site"/>
</dbReference>
<dbReference type="NCBIfam" id="TIGR00517">
    <property type="entry name" value="acyl_carrier"/>
    <property type="match status" value="1"/>
</dbReference>
<dbReference type="NCBIfam" id="NF002148">
    <property type="entry name" value="PRK00982.1-2"/>
    <property type="match status" value="1"/>
</dbReference>
<dbReference type="NCBIfam" id="NF002149">
    <property type="entry name" value="PRK00982.1-3"/>
    <property type="match status" value="1"/>
</dbReference>
<dbReference type="NCBIfam" id="NF002150">
    <property type="entry name" value="PRK00982.1-4"/>
    <property type="match status" value="1"/>
</dbReference>
<dbReference type="NCBIfam" id="NF002151">
    <property type="entry name" value="PRK00982.1-5"/>
    <property type="match status" value="1"/>
</dbReference>
<dbReference type="PANTHER" id="PTHR20863">
    <property type="entry name" value="ACYL CARRIER PROTEIN"/>
    <property type="match status" value="1"/>
</dbReference>
<dbReference type="PANTHER" id="PTHR20863:SF76">
    <property type="entry name" value="CARRIER DOMAIN-CONTAINING PROTEIN"/>
    <property type="match status" value="1"/>
</dbReference>
<dbReference type="Pfam" id="PF00550">
    <property type="entry name" value="PP-binding"/>
    <property type="match status" value="1"/>
</dbReference>
<dbReference type="SUPFAM" id="SSF47336">
    <property type="entry name" value="ACP-like"/>
    <property type="match status" value="1"/>
</dbReference>
<dbReference type="PROSITE" id="PS50075">
    <property type="entry name" value="CARRIER"/>
    <property type="match status" value="1"/>
</dbReference>
<dbReference type="PROSITE" id="PS00012">
    <property type="entry name" value="PHOSPHOPANTETHEINE"/>
    <property type="match status" value="1"/>
</dbReference>
<protein>
    <recommendedName>
        <fullName evidence="1">Acyl carrier protein</fullName>
        <shortName evidence="1">ACP</shortName>
    </recommendedName>
</protein>
<feature type="chain" id="PRO_1000139024" description="Acyl carrier protein">
    <location>
        <begin position="1"/>
        <end position="78"/>
    </location>
</feature>
<feature type="domain" description="Carrier" evidence="2">
    <location>
        <begin position="2"/>
        <end position="77"/>
    </location>
</feature>
<feature type="modified residue" description="O-(pantetheine 4'-phosphoryl)serine" evidence="2">
    <location>
        <position position="37"/>
    </location>
</feature>
<proteinExistence type="inferred from homology"/>
<organism>
    <name type="scientific">Escherichia coli (strain K12 / DH10B)</name>
    <dbReference type="NCBI Taxonomy" id="316385"/>
    <lineage>
        <taxon>Bacteria</taxon>
        <taxon>Pseudomonadati</taxon>
        <taxon>Pseudomonadota</taxon>
        <taxon>Gammaproteobacteria</taxon>
        <taxon>Enterobacterales</taxon>
        <taxon>Enterobacteriaceae</taxon>
        <taxon>Escherichia</taxon>
    </lineage>
</organism>
<gene>
    <name evidence="1" type="primary">acpP</name>
    <name type="ordered locus">ECDH10B_1166</name>
</gene>
<reference key="1">
    <citation type="journal article" date="2008" name="J. Bacteriol.">
        <title>The complete genome sequence of Escherichia coli DH10B: insights into the biology of a laboratory workhorse.</title>
        <authorList>
            <person name="Durfee T."/>
            <person name="Nelson R."/>
            <person name="Baldwin S."/>
            <person name="Plunkett G. III"/>
            <person name="Burland V."/>
            <person name="Mau B."/>
            <person name="Petrosino J.F."/>
            <person name="Qin X."/>
            <person name="Muzny D.M."/>
            <person name="Ayele M."/>
            <person name="Gibbs R.A."/>
            <person name="Csorgo B."/>
            <person name="Posfai G."/>
            <person name="Weinstock G.M."/>
            <person name="Blattner F.R."/>
        </authorList>
    </citation>
    <scope>NUCLEOTIDE SEQUENCE [LARGE SCALE GENOMIC DNA]</scope>
    <source>
        <strain>K12 / DH10B</strain>
    </source>
</reference>
<sequence length="78" mass="8640">MSTIEERVKKIIGEQLGVKQEEVTNNASFVEDLGADSLDTVELVMALEEEFDTEIPDEEAEKITTVQAAIDYINGHQA</sequence>
<keyword id="KW-0963">Cytoplasm</keyword>
<keyword id="KW-0275">Fatty acid biosynthesis</keyword>
<keyword id="KW-0276">Fatty acid metabolism</keyword>
<keyword id="KW-0444">Lipid biosynthesis</keyword>
<keyword id="KW-0443">Lipid metabolism</keyword>
<keyword id="KW-0596">Phosphopantetheine</keyword>
<keyword id="KW-0597">Phosphoprotein</keyword>
<comment type="function">
    <text evidence="1">Carrier of the growing fatty acid chain in fatty acid biosynthesis.</text>
</comment>
<comment type="pathway">
    <text evidence="1">Lipid metabolism; fatty acid biosynthesis.</text>
</comment>
<comment type="subcellular location">
    <subcellularLocation>
        <location evidence="1">Cytoplasm</location>
    </subcellularLocation>
</comment>
<comment type="PTM">
    <text evidence="1">4'-phosphopantetheine is transferred from CoA to a specific serine of apo-ACP by AcpS. This modification is essential for activity because fatty acids are bound in thioester linkage to the sulfhydryl of the prosthetic group.</text>
</comment>
<comment type="similarity">
    <text evidence="1">Belongs to the acyl carrier protein (ACP) family.</text>
</comment>
<name>ACP_ECODH</name>
<accession>B1XA04</accession>
<evidence type="ECO:0000255" key="1">
    <source>
        <dbReference type="HAMAP-Rule" id="MF_01217"/>
    </source>
</evidence>
<evidence type="ECO:0000255" key="2">
    <source>
        <dbReference type="PROSITE-ProRule" id="PRU00258"/>
    </source>
</evidence>